<evidence type="ECO:0000250" key="1"/>
<evidence type="ECO:0000250" key="2">
    <source>
        <dbReference type="UniProtKB" id="P55057"/>
    </source>
</evidence>
<evidence type="ECO:0000305" key="3"/>
<dbReference type="EMBL" id="AQIB01135957">
    <property type="status" value="NOT_ANNOTATED_CDS"/>
    <property type="molecule type" value="Genomic_DNA"/>
</dbReference>
<dbReference type="EMBL" id="AQIB01135958">
    <property type="status" value="NOT_ANNOTATED_CDS"/>
    <property type="molecule type" value="Genomic_DNA"/>
</dbReference>
<dbReference type="EMBL" id="AQIB01135959">
    <property type="status" value="NOT_ANNOTATED_CDS"/>
    <property type="molecule type" value="Genomic_DNA"/>
</dbReference>
<dbReference type="RefSeq" id="XP_007995348.1">
    <property type="nucleotide sequence ID" value="XM_007997157.2"/>
</dbReference>
<dbReference type="STRING" id="60711.ENSCSAP00000014803"/>
<dbReference type="Ensembl" id="ENSCSAT00000001272.1">
    <property type="protein sequence ID" value="ENSCSAP00000014803.1"/>
    <property type="gene ID" value="ENSCSAG00000003243.1"/>
</dbReference>
<dbReference type="GeneID" id="103234842"/>
<dbReference type="KEGG" id="csab:103234842"/>
<dbReference type="CTD" id="346"/>
<dbReference type="eggNOG" id="ENOG502TE52">
    <property type="taxonomic scope" value="Eukaryota"/>
</dbReference>
<dbReference type="GeneTree" id="ENSGT00390000015914"/>
<dbReference type="OMA" id="KWQWFWG"/>
<dbReference type="OrthoDB" id="8693at314294"/>
<dbReference type="BioGRID-ORCS" id="103234842">
    <property type="hits" value="0 hits in 7 CRISPR screens"/>
</dbReference>
<dbReference type="Proteomes" id="UP000029965">
    <property type="component" value="Chromosome 6"/>
</dbReference>
<dbReference type="Bgee" id="ENSCSAG00000003243">
    <property type="expression patterns" value="Expressed in liver and 3 other cell types or tissues"/>
</dbReference>
<dbReference type="GO" id="GO:0034364">
    <property type="term" value="C:high-density lipoprotein particle"/>
    <property type="evidence" value="ECO:0007669"/>
    <property type="project" value="Ensembl"/>
</dbReference>
<dbReference type="GO" id="GO:0034361">
    <property type="term" value="C:very-low-density lipoprotein particle"/>
    <property type="evidence" value="ECO:0007669"/>
    <property type="project" value="Ensembl"/>
</dbReference>
<dbReference type="GO" id="GO:0019915">
    <property type="term" value="P:lipid storage"/>
    <property type="evidence" value="ECO:0007669"/>
    <property type="project" value="Ensembl"/>
</dbReference>
<dbReference type="GO" id="GO:0006869">
    <property type="term" value="P:lipid transport"/>
    <property type="evidence" value="ECO:0007669"/>
    <property type="project" value="UniProtKB-KW"/>
</dbReference>
<dbReference type="GO" id="GO:0010890">
    <property type="term" value="P:positive regulation of triglyceride storage"/>
    <property type="evidence" value="ECO:0007669"/>
    <property type="project" value="TreeGrafter"/>
</dbReference>
<dbReference type="GO" id="GO:0070328">
    <property type="term" value="P:triglyceride homeostasis"/>
    <property type="evidence" value="ECO:0007669"/>
    <property type="project" value="Ensembl"/>
</dbReference>
<dbReference type="InterPro" id="IPR028120">
    <property type="entry name" value="APOC4"/>
</dbReference>
<dbReference type="PANTHER" id="PTHR32288">
    <property type="entry name" value="APOLIPOPROTEIN C-IV"/>
    <property type="match status" value="1"/>
</dbReference>
<dbReference type="PANTHER" id="PTHR32288:SF0">
    <property type="entry name" value="APOLIPOPROTEIN C-IV"/>
    <property type="match status" value="1"/>
</dbReference>
<dbReference type="Pfam" id="PF15119">
    <property type="entry name" value="APOC4"/>
    <property type="match status" value="1"/>
</dbReference>
<accession>A0A0D9S1R4</accession>
<name>APOC4_CHLSB</name>
<protein>
    <recommendedName>
        <fullName>Apolipoprotein C-IV</fullName>
        <shortName>Apo-CIV</shortName>
        <shortName>ApoC-IV</shortName>
    </recommendedName>
    <alternativeName>
        <fullName>Apolipoprotein C4</fullName>
    </alternativeName>
</protein>
<proteinExistence type="inferred from homology"/>
<sequence length="127" mass="14635">MSLLRNRLQDLPALCLCVLVLACIGACQSEAYEGTPSPPPKLKMSHWSLVTGRMKELLEPVVNRTRDRWQWFWSPSTFRGFMQTYYDDHLRDLGPRTKAWLLKSKESLLNKTHSLCPRIVCGDKDQG</sequence>
<keyword id="KW-0445">Lipid transport</keyword>
<keyword id="KW-1185">Reference proteome</keyword>
<keyword id="KW-0964">Secreted</keyword>
<keyword id="KW-0732">Signal</keyword>
<keyword id="KW-0813">Transport</keyword>
<reference key="1">
    <citation type="submission" date="2014-03" db="EMBL/GenBank/DDBJ databases">
        <authorList>
            <person name="Warren W."/>
            <person name="Wilson R.K."/>
        </authorList>
    </citation>
    <scope>NUCLEOTIDE SEQUENCE [LARGE SCALE GENOMIC DNA]</scope>
</reference>
<reference key="2">
    <citation type="unpublished observations" date="2019-04">
        <authorList>
            <person name="Puppione D.L."/>
        </authorList>
    </citation>
    <scope>IDENTIFICATION</scope>
</reference>
<comment type="function">
    <text evidence="1">May participate in lipoprotein metabolism.</text>
</comment>
<comment type="subcellular location">
    <subcellularLocation>
        <location evidence="1">Secreted</location>
    </subcellularLocation>
</comment>
<comment type="similarity">
    <text evidence="3">Belongs to the apolipoprotein C4 family.</text>
</comment>
<gene>
    <name type="primary">APOC4</name>
</gene>
<feature type="signal peptide" evidence="2">
    <location>
        <begin position="1"/>
        <end position="27"/>
    </location>
</feature>
<feature type="chain" id="PRO_5002346276" description="Apolipoprotein C-IV">
    <location>
        <begin position="28"/>
        <end position="127"/>
    </location>
</feature>
<organism>
    <name type="scientific">Chlorocebus sabaeus</name>
    <name type="common">Green monkey</name>
    <name type="synonym">Simia sabaea</name>
    <dbReference type="NCBI Taxonomy" id="60711"/>
    <lineage>
        <taxon>Eukaryota</taxon>
        <taxon>Metazoa</taxon>
        <taxon>Chordata</taxon>
        <taxon>Craniata</taxon>
        <taxon>Vertebrata</taxon>
        <taxon>Euteleostomi</taxon>
        <taxon>Mammalia</taxon>
        <taxon>Eutheria</taxon>
        <taxon>Euarchontoglires</taxon>
        <taxon>Primates</taxon>
        <taxon>Haplorrhini</taxon>
        <taxon>Catarrhini</taxon>
        <taxon>Cercopithecidae</taxon>
        <taxon>Cercopithecinae</taxon>
        <taxon>Chlorocebus</taxon>
    </lineage>
</organism>